<evidence type="ECO:0000250" key="1"/>
<evidence type="ECO:0000250" key="2">
    <source>
        <dbReference type="UniProtKB" id="P40227"/>
    </source>
</evidence>
<evidence type="ECO:0000250" key="3">
    <source>
        <dbReference type="UniProtKB" id="P80317"/>
    </source>
</evidence>
<evidence type="ECO:0000305" key="4"/>
<gene>
    <name type="primary">CCT6</name>
</gene>
<organism>
    <name type="scientific">Pongo abelii</name>
    <name type="common">Sumatran orangutan</name>
    <name type="synonym">Pongo pygmaeus abelii</name>
    <dbReference type="NCBI Taxonomy" id="9601"/>
    <lineage>
        <taxon>Eukaryota</taxon>
        <taxon>Metazoa</taxon>
        <taxon>Chordata</taxon>
        <taxon>Craniata</taxon>
        <taxon>Vertebrata</taxon>
        <taxon>Euteleostomi</taxon>
        <taxon>Mammalia</taxon>
        <taxon>Eutheria</taxon>
        <taxon>Euarchontoglires</taxon>
        <taxon>Primates</taxon>
        <taxon>Haplorrhini</taxon>
        <taxon>Catarrhini</taxon>
        <taxon>Hominidae</taxon>
        <taxon>Pongo</taxon>
    </lineage>
</organism>
<sequence length="531" mass="58077">MAAVKTLNPKAEVARAQAALAVNISAARGLQDVLRTNLGPKGTMKMLVSGAGDIKLTKDGNVLLHEMQIQHPTASLIAKVATAQDDITGDGTTSNVLIIGELLKQADLYISEGLHPRIITEGFEAAKEKALQFLEEVKVSREMDRETLIDVARTSLRTKVHAELADVLTEAVVDSILAIKKQDEPIDLFMIEIMEMKHKSETDTSLIRGLVLDHGARHPDMKKRVEDAYILTCNVSLEYEKTEVNSGFFYKSAEEREKLVKAERKFIEDRVKKIIELKRKVCGDSDKGFVVINQKGIDPFSLDALSKEGIVALRRAKRRNMERLTLACGGVALNSFDDLSPDQLGHAGLVYEYTLGEEKFTFIEKCNNPRSVTLLIKGPNKHTLTQIKDAVRDGLRAVRNAIDDGCVVPGAGAVEVAMAEALIKHKPSVKGRAQLGVQAFADALLIIPKVLAQNSGFDLQETLVKIQAEHSESGQLVGVDLNTGEPMVAAEVGVWDNYCVKKQLLHSCTVIATNILLVDEIMRAGMSSLKG</sequence>
<protein>
    <recommendedName>
        <fullName>T-complex protein 1 subunit zeta</fullName>
        <shortName>TCP-1-zeta</shortName>
        <ecNumber evidence="2">3.6.1.-</ecNumber>
    </recommendedName>
    <alternativeName>
        <fullName>CCT-zeta</fullName>
    </alternativeName>
</protein>
<reference key="1">
    <citation type="submission" date="2004-11" db="EMBL/GenBank/DDBJ databases">
        <authorList>
            <consortium name="The German cDNA consortium"/>
        </authorList>
    </citation>
    <scope>NUCLEOTIDE SEQUENCE [LARGE SCALE MRNA]</scope>
    <source>
        <tissue>Brain cortex</tissue>
    </source>
</reference>
<keyword id="KW-0007">Acetylation</keyword>
<keyword id="KW-0067">ATP-binding</keyword>
<keyword id="KW-0143">Chaperone</keyword>
<keyword id="KW-0963">Cytoplasm</keyword>
<keyword id="KW-0378">Hydrolase</keyword>
<keyword id="KW-1017">Isopeptide bond</keyword>
<keyword id="KW-0460">Magnesium</keyword>
<keyword id="KW-0479">Metal-binding</keyword>
<keyword id="KW-0547">Nucleotide-binding</keyword>
<keyword id="KW-0597">Phosphoprotein</keyword>
<keyword id="KW-1185">Reference proteome</keyword>
<keyword id="KW-0832">Ubl conjugation</keyword>
<accession>Q5RCD2</accession>
<feature type="initiator methionine" description="Removed" evidence="2">
    <location>
        <position position="1"/>
    </location>
</feature>
<feature type="chain" id="PRO_0000128358" description="T-complex protein 1 subunit zeta">
    <location>
        <begin position="2"/>
        <end position="531"/>
    </location>
</feature>
<feature type="binding site" evidence="2">
    <location>
        <position position="39"/>
    </location>
    <ligand>
        <name>ADP</name>
        <dbReference type="ChEBI" id="CHEBI:456216"/>
    </ligand>
</feature>
<feature type="binding site" evidence="2">
    <location>
        <position position="39"/>
    </location>
    <ligand>
        <name>ATP</name>
        <dbReference type="ChEBI" id="CHEBI:30616"/>
    </ligand>
</feature>
<feature type="binding site" evidence="2">
    <location>
        <position position="90"/>
    </location>
    <ligand>
        <name>Mg(2+)</name>
        <dbReference type="ChEBI" id="CHEBI:18420"/>
    </ligand>
</feature>
<feature type="binding site" evidence="2">
    <location>
        <position position="91"/>
    </location>
    <ligand>
        <name>ADP</name>
        <dbReference type="ChEBI" id="CHEBI:456216"/>
    </ligand>
</feature>
<feature type="binding site" evidence="2">
    <location>
        <position position="91"/>
    </location>
    <ligand>
        <name>ATP</name>
        <dbReference type="ChEBI" id="CHEBI:30616"/>
    </ligand>
</feature>
<feature type="binding site" evidence="2">
    <location>
        <position position="92"/>
    </location>
    <ligand>
        <name>ADP</name>
        <dbReference type="ChEBI" id="CHEBI:456216"/>
    </ligand>
</feature>
<feature type="binding site" evidence="2">
    <location>
        <position position="92"/>
    </location>
    <ligand>
        <name>ATP</name>
        <dbReference type="ChEBI" id="CHEBI:30616"/>
    </ligand>
</feature>
<feature type="binding site" evidence="2">
    <location>
        <position position="93"/>
    </location>
    <ligand>
        <name>ADP</name>
        <dbReference type="ChEBI" id="CHEBI:456216"/>
    </ligand>
</feature>
<feature type="binding site" evidence="2">
    <location>
        <position position="93"/>
    </location>
    <ligand>
        <name>ATP</name>
        <dbReference type="ChEBI" id="CHEBI:30616"/>
    </ligand>
</feature>
<feature type="binding site" evidence="2">
    <location>
        <position position="94"/>
    </location>
    <ligand>
        <name>ADP</name>
        <dbReference type="ChEBI" id="CHEBI:456216"/>
    </ligand>
</feature>
<feature type="binding site" evidence="2">
    <location>
        <position position="158"/>
    </location>
    <ligand>
        <name>ADP</name>
        <dbReference type="ChEBI" id="CHEBI:456216"/>
    </ligand>
</feature>
<feature type="binding site" evidence="2">
    <location>
        <position position="159"/>
    </location>
    <ligand>
        <name>ADP</name>
        <dbReference type="ChEBI" id="CHEBI:456216"/>
    </ligand>
</feature>
<feature type="binding site" evidence="2">
    <location>
        <position position="411"/>
    </location>
    <ligand>
        <name>ADP</name>
        <dbReference type="ChEBI" id="CHEBI:456216"/>
    </ligand>
</feature>
<feature type="binding site" evidence="2">
    <location>
        <position position="411"/>
    </location>
    <ligand>
        <name>ATP</name>
        <dbReference type="ChEBI" id="CHEBI:30616"/>
    </ligand>
</feature>
<feature type="binding site" evidence="2">
    <location>
        <position position="412"/>
    </location>
    <ligand>
        <name>ATP</name>
        <dbReference type="ChEBI" id="CHEBI:30616"/>
    </ligand>
</feature>
<feature type="binding site" evidence="2">
    <location>
        <position position="496"/>
    </location>
    <ligand>
        <name>ADP</name>
        <dbReference type="ChEBI" id="CHEBI:456216"/>
    </ligand>
</feature>
<feature type="binding site" evidence="2">
    <location>
        <position position="496"/>
    </location>
    <ligand>
        <name>ATP</name>
        <dbReference type="ChEBI" id="CHEBI:30616"/>
    </ligand>
</feature>
<feature type="binding site" evidence="2">
    <location>
        <position position="501"/>
    </location>
    <ligand>
        <name>ATP</name>
        <dbReference type="ChEBI" id="CHEBI:30616"/>
    </ligand>
</feature>
<feature type="modified residue" description="N-acetylalanine" evidence="2">
    <location>
        <position position="2"/>
    </location>
</feature>
<feature type="modified residue" description="N6-acetyllysine" evidence="3">
    <location>
        <position position="5"/>
    </location>
</feature>
<feature type="modified residue" description="N6-acetyllysine" evidence="2">
    <location>
        <position position="199"/>
    </location>
</feature>
<feature type="modified residue" description="Phosphoserine" evidence="2">
    <location>
        <position position="205"/>
    </location>
</feature>
<feature type="modified residue" description="N6-acetyllysine" evidence="3">
    <location>
        <position position="287"/>
    </location>
</feature>
<feature type="modified residue" description="N6-acetyllysine" evidence="2">
    <location>
        <position position="365"/>
    </location>
</feature>
<feature type="modified residue" description="N6-acetyllysine" evidence="2">
    <location>
        <position position="377"/>
    </location>
</feature>
<feature type="modified residue" description="N6-acetyllysine" evidence="2">
    <location>
        <position position="388"/>
    </location>
</feature>
<feature type="cross-link" description="Glycyl lysine isopeptide (Lys-Gly) (interchain with G-Cter in SUMO2)" evidence="2">
    <location>
        <position position="251"/>
    </location>
</feature>
<proteinExistence type="evidence at transcript level"/>
<dbReference type="EC" id="3.6.1.-" evidence="2"/>
<dbReference type="EMBL" id="CR858342">
    <property type="protein sequence ID" value="CAH90575.1"/>
    <property type="molecule type" value="mRNA"/>
</dbReference>
<dbReference type="RefSeq" id="NP_001125308.1">
    <property type="nucleotide sequence ID" value="NM_001131836.1"/>
</dbReference>
<dbReference type="SMR" id="Q5RCD2"/>
<dbReference type="FunCoup" id="Q5RCD2">
    <property type="interactions" value="2694"/>
</dbReference>
<dbReference type="STRING" id="9601.ENSPPYP00000023457"/>
<dbReference type="GeneID" id="100172207"/>
<dbReference type="KEGG" id="pon:100172207"/>
<dbReference type="CTD" id="908"/>
<dbReference type="eggNOG" id="KOG0359">
    <property type="taxonomic scope" value="Eukaryota"/>
</dbReference>
<dbReference type="InParanoid" id="Q5RCD2"/>
<dbReference type="OrthoDB" id="10052040at2759"/>
<dbReference type="Proteomes" id="UP000001595">
    <property type="component" value="Unplaced"/>
</dbReference>
<dbReference type="GO" id="GO:0005832">
    <property type="term" value="C:chaperonin-containing T-complex"/>
    <property type="evidence" value="ECO:0000250"/>
    <property type="project" value="UniProtKB"/>
</dbReference>
<dbReference type="GO" id="GO:0005524">
    <property type="term" value="F:ATP binding"/>
    <property type="evidence" value="ECO:0007669"/>
    <property type="project" value="UniProtKB-KW"/>
</dbReference>
<dbReference type="GO" id="GO:0016887">
    <property type="term" value="F:ATP hydrolysis activity"/>
    <property type="evidence" value="ECO:0007669"/>
    <property type="project" value="InterPro"/>
</dbReference>
<dbReference type="GO" id="GO:0140662">
    <property type="term" value="F:ATP-dependent protein folding chaperone"/>
    <property type="evidence" value="ECO:0007669"/>
    <property type="project" value="InterPro"/>
</dbReference>
<dbReference type="GO" id="GO:0051082">
    <property type="term" value="F:unfolded protein binding"/>
    <property type="evidence" value="ECO:0007669"/>
    <property type="project" value="InterPro"/>
</dbReference>
<dbReference type="CDD" id="cd03342">
    <property type="entry name" value="TCP1_zeta"/>
    <property type="match status" value="1"/>
</dbReference>
<dbReference type="FunFam" id="3.30.260.10:FF:000029">
    <property type="entry name" value="Chaperonin containing TCP1 subunit 6B"/>
    <property type="match status" value="1"/>
</dbReference>
<dbReference type="FunFam" id="1.10.560.10:FF:000022">
    <property type="entry name" value="T-complex protein 1 subunit zeta"/>
    <property type="match status" value="2"/>
</dbReference>
<dbReference type="FunFam" id="3.30.260.10:FF:000017">
    <property type="entry name" value="T-complex protein 1 subunit zeta"/>
    <property type="match status" value="1"/>
</dbReference>
<dbReference type="FunFam" id="3.50.7.10:FF:000004">
    <property type="entry name" value="T-complex protein 1 subunit zeta"/>
    <property type="match status" value="1"/>
</dbReference>
<dbReference type="Gene3D" id="3.50.7.10">
    <property type="entry name" value="GroEL"/>
    <property type="match status" value="1"/>
</dbReference>
<dbReference type="Gene3D" id="1.10.560.10">
    <property type="entry name" value="GroEL-like equatorial domain"/>
    <property type="match status" value="1"/>
</dbReference>
<dbReference type="Gene3D" id="3.30.260.10">
    <property type="entry name" value="TCP-1-like chaperonin intermediate domain"/>
    <property type="match status" value="1"/>
</dbReference>
<dbReference type="InterPro" id="IPR012722">
    <property type="entry name" value="Chap_CCT_zeta"/>
</dbReference>
<dbReference type="InterPro" id="IPR017998">
    <property type="entry name" value="Chaperone_TCP-1"/>
</dbReference>
<dbReference type="InterPro" id="IPR002194">
    <property type="entry name" value="Chaperonin_TCP-1_CS"/>
</dbReference>
<dbReference type="InterPro" id="IPR002423">
    <property type="entry name" value="Cpn60/GroEL/TCP-1"/>
</dbReference>
<dbReference type="InterPro" id="IPR027409">
    <property type="entry name" value="GroEL-like_apical_dom_sf"/>
</dbReference>
<dbReference type="InterPro" id="IPR027413">
    <property type="entry name" value="GROEL-like_equatorial_sf"/>
</dbReference>
<dbReference type="InterPro" id="IPR027410">
    <property type="entry name" value="TCP-1-like_intermed_sf"/>
</dbReference>
<dbReference type="InterPro" id="IPR053374">
    <property type="entry name" value="TCP-1_chaperonin"/>
</dbReference>
<dbReference type="NCBIfam" id="TIGR02347">
    <property type="entry name" value="chap_CCT_zeta"/>
    <property type="match status" value="1"/>
</dbReference>
<dbReference type="NCBIfam" id="NF041083">
    <property type="entry name" value="thermosome_beta"/>
    <property type="match status" value="1"/>
</dbReference>
<dbReference type="PANTHER" id="PTHR11353">
    <property type="entry name" value="CHAPERONIN"/>
    <property type="match status" value="1"/>
</dbReference>
<dbReference type="Pfam" id="PF00118">
    <property type="entry name" value="Cpn60_TCP1"/>
    <property type="match status" value="1"/>
</dbReference>
<dbReference type="PRINTS" id="PR00304">
    <property type="entry name" value="TCOMPLEXTCP1"/>
</dbReference>
<dbReference type="SUPFAM" id="SSF52029">
    <property type="entry name" value="GroEL apical domain-like"/>
    <property type="match status" value="1"/>
</dbReference>
<dbReference type="SUPFAM" id="SSF48592">
    <property type="entry name" value="GroEL equatorial domain-like"/>
    <property type="match status" value="1"/>
</dbReference>
<dbReference type="SUPFAM" id="SSF54849">
    <property type="entry name" value="GroEL-intermediate domain like"/>
    <property type="match status" value="1"/>
</dbReference>
<dbReference type="PROSITE" id="PS00750">
    <property type="entry name" value="TCP1_1"/>
    <property type="match status" value="1"/>
</dbReference>
<dbReference type="PROSITE" id="PS00751">
    <property type="entry name" value="TCP1_2"/>
    <property type="match status" value="1"/>
</dbReference>
<dbReference type="PROSITE" id="PS00995">
    <property type="entry name" value="TCP1_3"/>
    <property type="match status" value="1"/>
</dbReference>
<name>TCPZ_PONAB</name>
<comment type="function">
    <text evidence="2">Component of the chaperonin-containing T-complex (TRiC), a molecular chaperone complex that assists the folding of actin, tubulin and other proteins upon ATP hydrolysis. The TRiC complex mediates the folding of WRAP53/TCAB1, thereby regulating telomere maintenance.</text>
</comment>
<comment type="catalytic activity">
    <reaction evidence="2">
        <text>ATP + H2O = ADP + phosphate + H(+)</text>
        <dbReference type="Rhea" id="RHEA:13065"/>
        <dbReference type="ChEBI" id="CHEBI:15377"/>
        <dbReference type="ChEBI" id="CHEBI:15378"/>
        <dbReference type="ChEBI" id="CHEBI:30616"/>
        <dbReference type="ChEBI" id="CHEBI:43474"/>
        <dbReference type="ChEBI" id="CHEBI:456216"/>
    </reaction>
</comment>
<comment type="subunit">
    <text evidence="2">Component of the chaperonin-containing T-complex (TRiC), a hexadecamer composed of two identical back-to-back stacked rings enclosing a protein folding chamber. Each ring is made up of eight different subunits: TCP1/CCT1, CCT2, CCT3, CCT4, CCT5, CCT6A/CCT6, CCT7, CCT8. Interacts with PACRG.</text>
</comment>
<comment type="subcellular location">
    <subcellularLocation>
        <location evidence="1">Cytoplasm</location>
    </subcellularLocation>
</comment>
<comment type="similarity">
    <text evidence="4">Belongs to the TCP-1 chaperonin family.</text>
</comment>